<keyword id="KW-0007">Acetylation</keyword>
<keyword id="KW-0963">Cytoplasm</keyword>
<keyword id="KW-1017">Isopeptide bond</keyword>
<keyword id="KW-0479">Metal-binding</keyword>
<keyword id="KW-0507">mRNA processing</keyword>
<keyword id="KW-0508">mRNA splicing</keyword>
<keyword id="KW-0539">Nucleus</keyword>
<keyword id="KW-0597">Phosphoprotein</keyword>
<keyword id="KW-1185">Reference proteome</keyword>
<keyword id="KW-0747">Spliceosome</keyword>
<keyword id="KW-0832">Ubl conjugation</keyword>
<keyword id="KW-0862">Zinc</keyword>
<keyword id="KW-0863">Zinc-finger</keyword>
<proteinExistence type="evidence at protein level"/>
<comment type="function">
    <text evidence="2">Required for pre-mRNA splicing as component of the spliceosome. Participates in the second catalytic step of pre-mRNA splicing, when the free hydroxyl group of exon I attacks the 3'-splice site to generate spliced mRNA and the excised lariat intron. Required for holding exon 1 properly in the spliceosome and for correct AG identification when more than one possible AG exists in 3'-splicing site region. May be involved in the activation of proximal AG. Probably also involved in alternative splicing regulation.</text>
</comment>
<comment type="subunit">
    <text evidence="2">Component of pre-catalytic, catalytic and post-catalytic spliceosomes. Associates with the spliceosome prior to recognition of the 3'-splice site for step II, probably during catalysis of step I.</text>
</comment>
<comment type="subcellular location">
    <subcellularLocation>
        <location evidence="2">Nucleus</location>
    </subcellularLocation>
    <subcellularLocation>
        <location evidence="2">Nucleus speckle</location>
    </subcellularLocation>
    <subcellularLocation>
        <location evidence="2">Cytoplasm</location>
    </subcellularLocation>
    <text evidence="2">Predominantly nuclear. Shuttling between the nucleus and the cytoplasm is regulated by the CCHC-type zinc finger. Upon UV-C stress stimulus, the nuclear concentration of the protein decreases, affecting alternative splicing. Translocates from the nucleus to the cytoplasm after heat shock cell treatment. Accumulates in cytoplasmic vesicle-like organelles after heat shock treatment, which may represent stress granules.</text>
</comment>
<comment type="domain">
    <text evidence="1">The CCHC-type zinc finger is required to retain the protein within the nucleus and prevent its shuttle back to the cytoplasm via the CRM1 pathway.</text>
</comment>
<comment type="similarity">
    <text evidence="4">Belongs to the SLU7 family.</text>
</comment>
<comment type="sequence caution" evidence="4">
    <conflict type="miscellaneous discrepancy">
        <sequence resource="EMBL-CDS" id="AAO17154"/>
    </conflict>
    <text>Many sequencing errors.</text>
</comment>
<evidence type="ECO:0000250" key="1"/>
<evidence type="ECO:0000250" key="2">
    <source>
        <dbReference type="UniProtKB" id="O95391"/>
    </source>
</evidence>
<evidence type="ECO:0000256" key="3">
    <source>
        <dbReference type="SAM" id="MobiDB-lite"/>
    </source>
</evidence>
<evidence type="ECO:0000305" key="4"/>
<evidence type="ECO:0007744" key="5">
    <source>
    </source>
</evidence>
<protein>
    <recommendedName>
        <fullName>Pre-mRNA-splicing factor SLU7</fullName>
    </recommendedName>
</protein>
<organism>
    <name type="scientific">Rattus norvegicus</name>
    <name type="common">Rat</name>
    <dbReference type="NCBI Taxonomy" id="10116"/>
    <lineage>
        <taxon>Eukaryota</taxon>
        <taxon>Metazoa</taxon>
        <taxon>Chordata</taxon>
        <taxon>Craniata</taxon>
        <taxon>Vertebrata</taxon>
        <taxon>Euteleostomi</taxon>
        <taxon>Mammalia</taxon>
        <taxon>Eutheria</taxon>
        <taxon>Euarchontoglires</taxon>
        <taxon>Glires</taxon>
        <taxon>Rodentia</taxon>
        <taxon>Myomorpha</taxon>
        <taxon>Muroidea</taxon>
        <taxon>Muridae</taxon>
        <taxon>Murinae</taxon>
        <taxon>Rattus</taxon>
    </lineage>
</organism>
<dbReference type="EMBL" id="AY207315">
    <property type="protein sequence ID" value="AAO17154.2"/>
    <property type="status" value="ALT_SEQ"/>
    <property type="molecule type" value="mRNA"/>
</dbReference>
<dbReference type="EMBL" id="AABR03074285">
    <property type="status" value="NOT_ANNOTATED_CDS"/>
    <property type="molecule type" value="Genomic_DNA"/>
</dbReference>
<dbReference type="EMBL" id="AABR03076495">
    <property type="status" value="NOT_ANNOTATED_CDS"/>
    <property type="molecule type" value="Genomic_DNA"/>
</dbReference>
<dbReference type="EMBL" id="BC062243">
    <property type="protein sequence ID" value="AAH62243.1"/>
    <property type="status" value="ALT_TERM"/>
    <property type="molecule type" value="mRNA"/>
</dbReference>
<dbReference type="RefSeq" id="NP_001094020.1">
    <property type="nucleotide sequence ID" value="NM_001100550.1"/>
</dbReference>
<dbReference type="RefSeq" id="XP_008765864.1">
    <property type="nucleotide sequence ID" value="XM_008767642.4"/>
</dbReference>
<dbReference type="RefSeq" id="XP_063125032.1">
    <property type="nucleotide sequence ID" value="XM_063268962.1"/>
</dbReference>
<dbReference type="RefSeq" id="XP_063125033.1">
    <property type="nucleotide sequence ID" value="XM_063268963.1"/>
</dbReference>
<dbReference type="SMR" id="Q80ZG5"/>
<dbReference type="FunCoup" id="Q80ZG5">
    <property type="interactions" value="4645"/>
</dbReference>
<dbReference type="STRING" id="10116.ENSRNOP00000005132"/>
<dbReference type="iPTMnet" id="Q80ZG5"/>
<dbReference type="PhosphoSitePlus" id="Q80ZG5"/>
<dbReference type="PaxDb" id="10116-ENSRNOP00000005132"/>
<dbReference type="Ensembl" id="ENSRNOT00000005132.6">
    <property type="protein sequence ID" value="ENSRNOP00000005132.4"/>
    <property type="gene ID" value="ENSRNOG00000003822.7"/>
</dbReference>
<dbReference type="GeneID" id="303057"/>
<dbReference type="KEGG" id="rno:303057"/>
<dbReference type="UCSC" id="RGD:631432">
    <property type="organism name" value="rat"/>
</dbReference>
<dbReference type="AGR" id="RGD:631432"/>
<dbReference type="CTD" id="10569"/>
<dbReference type="RGD" id="631432">
    <property type="gene designation" value="Slu7"/>
</dbReference>
<dbReference type="eggNOG" id="KOG2560">
    <property type="taxonomic scope" value="Eukaryota"/>
</dbReference>
<dbReference type="GeneTree" id="ENSGT00390000002292"/>
<dbReference type="HOGENOM" id="CLU_019317_2_0_1"/>
<dbReference type="InParanoid" id="Q80ZG5"/>
<dbReference type="OMA" id="KYAWESQ"/>
<dbReference type="OrthoDB" id="249612at2759"/>
<dbReference type="PhylomeDB" id="Q80ZG5"/>
<dbReference type="TreeFam" id="TF105691"/>
<dbReference type="Reactome" id="R-RNO-159236">
    <property type="pathway name" value="Transport of Mature mRNA derived from an Intron-Containing Transcript"/>
</dbReference>
<dbReference type="Reactome" id="R-RNO-72163">
    <property type="pathway name" value="mRNA Splicing - Major Pathway"/>
</dbReference>
<dbReference type="Reactome" id="R-RNO-72187">
    <property type="pathway name" value="mRNA 3'-end processing"/>
</dbReference>
<dbReference type="Reactome" id="R-RNO-73856">
    <property type="pathway name" value="RNA Polymerase II Transcription Termination"/>
</dbReference>
<dbReference type="PRO" id="PR:Q80ZG5"/>
<dbReference type="Proteomes" id="UP000002494">
    <property type="component" value="Chromosome 10"/>
</dbReference>
<dbReference type="Bgee" id="ENSRNOG00000003822">
    <property type="expression patterns" value="Expressed in lung and 20 other cell types or tissues"/>
</dbReference>
<dbReference type="ExpressionAtlas" id="Q80ZG5">
    <property type="expression patterns" value="baseline and differential"/>
</dbReference>
<dbReference type="GO" id="GO:0071013">
    <property type="term" value="C:catalytic step 2 spliceosome"/>
    <property type="evidence" value="ECO:0000266"/>
    <property type="project" value="RGD"/>
</dbReference>
<dbReference type="GO" id="GO:0005737">
    <property type="term" value="C:cytoplasm"/>
    <property type="evidence" value="ECO:0000250"/>
    <property type="project" value="UniProtKB"/>
</dbReference>
<dbReference type="GO" id="GO:0005829">
    <property type="term" value="C:cytosol"/>
    <property type="evidence" value="ECO:0007669"/>
    <property type="project" value="Ensembl"/>
</dbReference>
<dbReference type="GO" id="GO:0016607">
    <property type="term" value="C:nuclear speck"/>
    <property type="evidence" value="ECO:0000250"/>
    <property type="project" value="HGNC-UCL"/>
</dbReference>
<dbReference type="GO" id="GO:0005634">
    <property type="term" value="C:nucleus"/>
    <property type="evidence" value="ECO:0000250"/>
    <property type="project" value="UniProtKB"/>
</dbReference>
<dbReference type="GO" id="GO:0030532">
    <property type="term" value="C:small nuclear ribonucleoprotein complex"/>
    <property type="evidence" value="ECO:0000250"/>
    <property type="project" value="HGNC-UCL"/>
</dbReference>
<dbReference type="GO" id="GO:0005681">
    <property type="term" value="C:spliceosomal complex"/>
    <property type="evidence" value="ECO:0000250"/>
    <property type="project" value="HGNC-UCL"/>
</dbReference>
<dbReference type="GO" id="GO:0030628">
    <property type="term" value="F:pre-mRNA 3'-splice site binding"/>
    <property type="evidence" value="ECO:0000250"/>
    <property type="project" value="HGNC-UCL"/>
</dbReference>
<dbReference type="GO" id="GO:0000386">
    <property type="term" value="F:second spliceosomal transesterification activity"/>
    <property type="evidence" value="ECO:0000250"/>
    <property type="project" value="HGNC-UCL"/>
</dbReference>
<dbReference type="GO" id="GO:0008270">
    <property type="term" value="F:zinc ion binding"/>
    <property type="evidence" value="ECO:0000250"/>
    <property type="project" value="HGNC-UCL"/>
</dbReference>
<dbReference type="GO" id="GO:0000380">
    <property type="term" value="P:alternative mRNA splicing, via spliceosome"/>
    <property type="evidence" value="ECO:0000250"/>
    <property type="project" value="HGNC-UCL"/>
</dbReference>
<dbReference type="GO" id="GO:0034605">
    <property type="term" value="P:cellular response to heat"/>
    <property type="evidence" value="ECO:0000250"/>
    <property type="project" value="UniProtKB"/>
</dbReference>
<dbReference type="GO" id="GO:0006886">
    <property type="term" value="P:intracellular protein transport"/>
    <property type="evidence" value="ECO:0000250"/>
    <property type="project" value="UniProtKB"/>
</dbReference>
<dbReference type="GO" id="GO:0000389">
    <property type="term" value="P:mRNA 3'-splice site recognition"/>
    <property type="evidence" value="ECO:0000250"/>
    <property type="project" value="HGNC-UCL"/>
</dbReference>
<dbReference type="GO" id="GO:0008380">
    <property type="term" value="P:RNA splicing"/>
    <property type="evidence" value="ECO:0000318"/>
    <property type="project" value="GO_Central"/>
</dbReference>
<dbReference type="GO" id="GO:0000375">
    <property type="term" value="P:RNA splicing, via transesterification reactions"/>
    <property type="evidence" value="ECO:0000250"/>
    <property type="project" value="HGNC-UCL"/>
</dbReference>
<dbReference type="InterPro" id="IPR021715">
    <property type="entry name" value="Slu7_dom"/>
</dbReference>
<dbReference type="InterPro" id="IPR039974">
    <property type="entry name" value="Splicing_factor_SLU7"/>
</dbReference>
<dbReference type="PANTHER" id="PTHR12942:SF2">
    <property type="entry name" value="PRE-MRNA-SPLICING FACTOR SLU7"/>
    <property type="match status" value="1"/>
</dbReference>
<dbReference type="PANTHER" id="PTHR12942">
    <property type="entry name" value="STEP II SPLICING FACTOR SLU7"/>
    <property type="match status" value="1"/>
</dbReference>
<dbReference type="Pfam" id="PF11708">
    <property type="entry name" value="Slu7"/>
    <property type="match status" value="1"/>
</dbReference>
<sequence>MSAAAVDPVSATPMTGSKEMNLEEPKKMTREDWRKKKELEEQRKLGNAPAEVDEEGKDINPHIPQYISSVPWYIDPSKRPTLKHQRPQPEKQKQFSSSGEWYKRGVKENSITTKYRKGACENCGAMTHKRKDCFERPRRVGAKFTGTNIAPDEHIQPQLMFDYDGKRDRWNGYNPEEHMKIVEEYAKVDLAKRTLKAQKLQEELASGKLVEQANSPKHQWGEEEPNSQMEKDHNSEDEDEDKYADDIDMPGQNFDSKRRITVRNLRIREDIAKYLRNLDPNSAYYDPKTRAMRENPYANAGKNPDEVSYAGDNFVRYTGDTISMAQTQLFAWEAYDKGSEVHLQADPTKLELLYKSFKVKKEDFKEQQKESILEKYGGQEHLDAPPAELLLAQTEDYVEYSRHGTVIKGQERAVACSKYEEDVKINNHTHIWGSYWKEGRWGYKCCHSFFKYSYCTGEAGKESVNSEECIINDATGEEPVKKPQTLMELHQEKLKEEKKKKKKKKKHRKSSSDSDDDEERKQEKLKKALNAEEARLLHVKEIMQVDERKRPYNSIYETREPTEEEMEAYRMKRQRPDDPMASFLGQ</sequence>
<gene>
    <name type="primary">Slu7</name>
</gene>
<reference key="1">
    <citation type="journal article" date="2004" name="Mol. Biol. Cell">
        <title>Splicing factor hSlu7 contains a unique functional domain required to retain the protein within the nucleus.</title>
        <authorList>
            <person name="Shomron N."/>
            <person name="Reznik M."/>
            <person name="Ast G."/>
        </authorList>
    </citation>
    <scope>NUCLEOTIDE SEQUENCE [MRNA]</scope>
</reference>
<reference key="2">
    <citation type="journal article" date="2004" name="Nature">
        <title>Genome sequence of the Brown Norway rat yields insights into mammalian evolution.</title>
        <authorList>
            <person name="Gibbs R.A."/>
            <person name="Weinstock G.M."/>
            <person name="Metzker M.L."/>
            <person name="Muzny D.M."/>
            <person name="Sodergren E.J."/>
            <person name="Scherer S."/>
            <person name="Scott G."/>
            <person name="Steffen D."/>
            <person name="Worley K.C."/>
            <person name="Burch P.E."/>
            <person name="Okwuonu G."/>
            <person name="Hines S."/>
            <person name="Lewis L."/>
            <person name="Deramo C."/>
            <person name="Delgado O."/>
            <person name="Dugan-Rocha S."/>
            <person name="Miner G."/>
            <person name="Morgan M."/>
            <person name="Hawes A."/>
            <person name="Gill R."/>
            <person name="Holt R.A."/>
            <person name="Adams M.D."/>
            <person name="Amanatides P.G."/>
            <person name="Baden-Tillson H."/>
            <person name="Barnstead M."/>
            <person name="Chin S."/>
            <person name="Evans C.A."/>
            <person name="Ferriera S."/>
            <person name="Fosler C."/>
            <person name="Glodek A."/>
            <person name="Gu Z."/>
            <person name="Jennings D."/>
            <person name="Kraft C.L."/>
            <person name="Nguyen T."/>
            <person name="Pfannkoch C.M."/>
            <person name="Sitter C."/>
            <person name="Sutton G.G."/>
            <person name="Venter J.C."/>
            <person name="Woodage T."/>
            <person name="Smith D."/>
            <person name="Lee H.-M."/>
            <person name="Gustafson E."/>
            <person name="Cahill P."/>
            <person name="Kana A."/>
            <person name="Doucette-Stamm L."/>
            <person name="Weinstock K."/>
            <person name="Fechtel K."/>
            <person name="Weiss R.B."/>
            <person name="Dunn D.M."/>
            <person name="Green E.D."/>
            <person name="Blakesley R.W."/>
            <person name="Bouffard G.G."/>
            <person name="De Jong P.J."/>
            <person name="Osoegawa K."/>
            <person name="Zhu B."/>
            <person name="Marra M."/>
            <person name="Schein J."/>
            <person name="Bosdet I."/>
            <person name="Fjell C."/>
            <person name="Jones S."/>
            <person name="Krzywinski M."/>
            <person name="Mathewson C."/>
            <person name="Siddiqui A."/>
            <person name="Wye N."/>
            <person name="McPherson J."/>
            <person name="Zhao S."/>
            <person name="Fraser C.M."/>
            <person name="Shetty J."/>
            <person name="Shatsman S."/>
            <person name="Geer K."/>
            <person name="Chen Y."/>
            <person name="Abramzon S."/>
            <person name="Nierman W.C."/>
            <person name="Havlak P.H."/>
            <person name="Chen R."/>
            <person name="Durbin K.J."/>
            <person name="Egan A."/>
            <person name="Ren Y."/>
            <person name="Song X.-Z."/>
            <person name="Li B."/>
            <person name="Liu Y."/>
            <person name="Qin X."/>
            <person name="Cawley S."/>
            <person name="Cooney A.J."/>
            <person name="D'Souza L.M."/>
            <person name="Martin K."/>
            <person name="Wu J.Q."/>
            <person name="Gonzalez-Garay M.L."/>
            <person name="Jackson A.R."/>
            <person name="Kalafus K.J."/>
            <person name="McLeod M.P."/>
            <person name="Milosavljevic A."/>
            <person name="Virk D."/>
            <person name="Volkov A."/>
            <person name="Wheeler D.A."/>
            <person name="Zhang Z."/>
            <person name="Bailey J.A."/>
            <person name="Eichler E.E."/>
            <person name="Tuzun E."/>
            <person name="Birney E."/>
            <person name="Mongin E."/>
            <person name="Ureta-Vidal A."/>
            <person name="Woodwark C."/>
            <person name="Zdobnov E."/>
            <person name="Bork P."/>
            <person name="Suyama M."/>
            <person name="Torrents D."/>
            <person name="Alexandersson M."/>
            <person name="Trask B.J."/>
            <person name="Young J.M."/>
            <person name="Huang H."/>
            <person name="Wang H."/>
            <person name="Xing H."/>
            <person name="Daniels S."/>
            <person name="Gietzen D."/>
            <person name="Schmidt J."/>
            <person name="Stevens K."/>
            <person name="Vitt U."/>
            <person name="Wingrove J."/>
            <person name="Camara F."/>
            <person name="Mar Alba M."/>
            <person name="Abril J.F."/>
            <person name="Guigo R."/>
            <person name="Smit A."/>
            <person name="Dubchak I."/>
            <person name="Rubin E.M."/>
            <person name="Couronne O."/>
            <person name="Poliakov A."/>
            <person name="Huebner N."/>
            <person name="Ganten D."/>
            <person name="Goesele C."/>
            <person name="Hummel O."/>
            <person name="Kreitler T."/>
            <person name="Lee Y.-A."/>
            <person name="Monti J."/>
            <person name="Schulz H."/>
            <person name="Zimdahl H."/>
            <person name="Himmelbauer H."/>
            <person name="Lehrach H."/>
            <person name="Jacob H.J."/>
            <person name="Bromberg S."/>
            <person name="Gullings-Handley J."/>
            <person name="Jensen-Seaman M.I."/>
            <person name="Kwitek A.E."/>
            <person name="Lazar J."/>
            <person name="Pasko D."/>
            <person name="Tonellato P.J."/>
            <person name="Twigger S."/>
            <person name="Ponting C.P."/>
            <person name="Duarte J.M."/>
            <person name="Rice S."/>
            <person name="Goodstadt L."/>
            <person name="Beatson S.A."/>
            <person name="Emes R.D."/>
            <person name="Winter E.E."/>
            <person name="Webber C."/>
            <person name="Brandt P."/>
            <person name="Nyakatura G."/>
            <person name="Adetobi M."/>
            <person name="Chiaromonte F."/>
            <person name="Elnitski L."/>
            <person name="Eswara P."/>
            <person name="Hardison R.C."/>
            <person name="Hou M."/>
            <person name="Kolbe D."/>
            <person name="Makova K."/>
            <person name="Miller W."/>
            <person name="Nekrutenko A."/>
            <person name="Riemer C."/>
            <person name="Schwartz S."/>
            <person name="Taylor J."/>
            <person name="Yang S."/>
            <person name="Zhang Y."/>
            <person name="Lindpaintner K."/>
            <person name="Andrews T.D."/>
            <person name="Caccamo M."/>
            <person name="Clamp M."/>
            <person name="Clarke L."/>
            <person name="Curwen V."/>
            <person name="Durbin R.M."/>
            <person name="Eyras E."/>
            <person name="Searle S.M."/>
            <person name="Cooper G.M."/>
            <person name="Batzoglou S."/>
            <person name="Brudno M."/>
            <person name="Sidow A."/>
            <person name="Stone E.A."/>
            <person name="Payseur B.A."/>
            <person name="Bourque G."/>
            <person name="Lopez-Otin C."/>
            <person name="Puente X.S."/>
            <person name="Chakrabarti K."/>
            <person name="Chatterji S."/>
            <person name="Dewey C."/>
            <person name="Pachter L."/>
            <person name="Bray N."/>
            <person name="Yap V.B."/>
            <person name="Caspi A."/>
            <person name="Tesler G."/>
            <person name="Pevzner P.A."/>
            <person name="Haussler D."/>
            <person name="Roskin K.M."/>
            <person name="Baertsch R."/>
            <person name="Clawson H."/>
            <person name="Furey T.S."/>
            <person name="Hinrichs A.S."/>
            <person name="Karolchik D."/>
            <person name="Kent W.J."/>
            <person name="Rosenbloom K.R."/>
            <person name="Trumbower H."/>
            <person name="Weirauch M."/>
            <person name="Cooper D.N."/>
            <person name="Stenson P.D."/>
            <person name="Ma B."/>
            <person name="Brent M."/>
            <person name="Arumugam M."/>
            <person name="Shteynberg D."/>
            <person name="Copley R.R."/>
            <person name="Taylor M.S."/>
            <person name="Riethman H."/>
            <person name="Mudunuri U."/>
            <person name="Peterson J."/>
            <person name="Guyer M."/>
            <person name="Felsenfeld A."/>
            <person name="Old S."/>
            <person name="Mockrin S."/>
            <person name="Collins F.S."/>
        </authorList>
    </citation>
    <scope>NUCLEOTIDE SEQUENCE [LARGE SCALE GENOMIC DNA]</scope>
    <source>
        <strain>Brown Norway</strain>
    </source>
</reference>
<reference key="3">
    <citation type="journal article" date="2004" name="Genome Res.">
        <title>The status, quality, and expansion of the NIH full-length cDNA project: the Mammalian Gene Collection (MGC).</title>
        <authorList>
            <consortium name="The MGC Project Team"/>
        </authorList>
    </citation>
    <scope>NUCLEOTIDE SEQUENCE [LARGE SCALE MRNA] OF 1-493</scope>
    <source>
        <tissue>Pituitary</tissue>
    </source>
</reference>
<reference key="4">
    <citation type="journal article" date="2012" name="Nat. Commun.">
        <title>Quantitative maps of protein phosphorylation sites across 14 different rat organs and tissues.</title>
        <authorList>
            <person name="Lundby A."/>
            <person name="Secher A."/>
            <person name="Lage K."/>
            <person name="Nordsborg N.B."/>
            <person name="Dmytriyev A."/>
            <person name="Lundby C."/>
            <person name="Olsen J.V."/>
        </authorList>
    </citation>
    <scope>PHOSPHORYLATION [LARGE SCALE ANALYSIS] AT SER-215 AND SER-235</scope>
    <scope>IDENTIFICATION BY MASS SPECTROMETRY [LARGE SCALE ANALYSIS]</scope>
</reference>
<name>SLU7_RAT</name>
<accession>Q80ZG5</accession>
<accession>Q6P6G1</accession>
<feature type="initiator methionine" description="Removed" evidence="2">
    <location>
        <position position="1"/>
    </location>
</feature>
<feature type="chain" id="PRO_0000289197" description="Pre-mRNA-splicing factor SLU7">
    <location>
        <begin position="2"/>
        <end position="586"/>
    </location>
</feature>
<feature type="zinc finger region" description="CCHC-type">
    <location>
        <begin position="118"/>
        <end position="135"/>
    </location>
</feature>
<feature type="region of interest" description="Disordered" evidence="3">
    <location>
        <begin position="1"/>
        <end position="102"/>
    </location>
</feature>
<feature type="region of interest" description="Disordered" evidence="3">
    <location>
        <begin position="206"/>
        <end position="254"/>
    </location>
</feature>
<feature type="region of interest" description="Disordered" evidence="3">
    <location>
        <begin position="496"/>
        <end position="586"/>
    </location>
</feature>
<feature type="short sequence motif" description="Bipartite nuclear localization signal" evidence="1">
    <location>
        <begin position="129"/>
        <end position="169"/>
    </location>
</feature>
<feature type="compositionally biased region" description="Basic and acidic residues" evidence="3">
    <location>
        <begin position="20"/>
        <end position="44"/>
    </location>
</feature>
<feature type="compositionally biased region" description="Acidic residues" evidence="3">
    <location>
        <begin position="235"/>
        <end position="248"/>
    </location>
</feature>
<feature type="compositionally biased region" description="Basic residues" evidence="3">
    <location>
        <begin position="498"/>
        <end position="509"/>
    </location>
</feature>
<feature type="compositionally biased region" description="Basic and acidic residues" evidence="3">
    <location>
        <begin position="519"/>
        <end position="550"/>
    </location>
</feature>
<feature type="compositionally biased region" description="Basic and acidic residues" evidence="3">
    <location>
        <begin position="557"/>
        <end position="578"/>
    </location>
</feature>
<feature type="modified residue" description="N-acetylserine" evidence="2">
    <location>
        <position position="2"/>
    </location>
</feature>
<feature type="modified residue" description="Phosphoserine" evidence="5">
    <location>
        <position position="215"/>
    </location>
</feature>
<feature type="modified residue" description="Phosphoserine" evidence="2">
    <location>
        <position position="227"/>
    </location>
</feature>
<feature type="modified residue" description="Phosphoserine" evidence="5">
    <location>
        <position position="235"/>
    </location>
</feature>
<feature type="cross-link" description="Glycyl lysine isopeptide (Lys-Gly) (interchain with G-Cter in SUMO2)" evidence="2">
    <location>
        <position position="349"/>
    </location>
</feature>
<feature type="cross-link" description="Glycyl lysine isopeptide (Lys-Gly) (interchain with G-Cter in SUMO2)" evidence="2">
    <location>
        <position position="408"/>
    </location>
</feature>